<protein>
    <recommendedName>
        <fullName evidence="1">Protein GrpE</fullName>
    </recommendedName>
    <alternativeName>
        <fullName evidence="1">HSP-70 cofactor</fullName>
    </alternativeName>
</protein>
<accession>A6QHC4</accession>
<reference key="1">
    <citation type="journal article" date="2008" name="J. Bacteriol.">
        <title>Genome sequence of Staphylococcus aureus strain Newman and comparative analysis of staphylococcal genomes: polymorphism and evolution of two major pathogenicity islands.</title>
        <authorList>
            <person name="Baba T."/>
            <person name="Bae T."/>
            <person name="Schneewind O."/>
            <person name="Takeuchi F."/>
            <person name="Hiramatsu K."/>
        </authorList>
    </citation>
    <scope>NUCLEOTIDE SEQUENCE [LARGE SCALE GENOMIC DNA]</scope>
    <source>
        <strain>Newman</strain>
    </source>
</reference>
<sequence>MTNKDESVEKNTESTVEETNVKQNIDDSVEQAEESKGHLQDEAIEETSDENVIEEIDPKDQKINELQQLADENEEKYLRLYAEFENYKRRIQKENEINKTYQAQRVLTDILPAIDNIERALQIEGDDETFKSLQKGVQMVHESLINALKDNGLEVIKTEGEAFDPNIHQAVVQDDNPDFESGEITQELQKGYKLKDRVLRPSMVKVNQ</sequence>
<feature type="chain" id="PRO_1000073068" description="Protein GrpE">
    <location>
        <begin position="1"/>
        <end position="208"/>
    </location>
</feature>
<feature type="region of interest" description="Disordered" evidence="2">
    <location>
        <begin position="1"/>
        <end position="51"/>
    </location>
</feature>
<feature type="compositionally biased region" description="Basic and acidic residues" evidence="2">
    <location>
        <begin position="1"/>
        <end position="12"/>
    </location>
</feature>
<feature type="compositionally biased region" description="Polar residues" evidence="2">
    <location>
        <begin position="13"/>
        <end position="23"/>
    </location>
</feature>
<feature type="compositionally biased region" description="Acidic residues" evidence="2">
    <location>
        <begin position="42"/>
        <end position="51"/>
    </location>
</feature>
<name>GRPE_STAAE</name>
<gene>
    <name evidence="1" type="primary">grpE</name>
    <name type="ordered locus">NWMN_1484</name>
</gene>
<dbReference type="EMBL" id="AP009351">
    <property type="protein sequence ID" value="BAF67756.1"/>
    <property type="molecule type" value="Genomic_DNA"/>
</dbReference>
<dbReference type="RefSeq" id="WP_000182215.1">
    <property type="nucleotide sequence ID" value="NZ_JBBIAE010000001.1"/>
</dbReference>
<dbReference type="SMR" id="A6QHC4"/>
<dbReference type="KEGG" id="sae:NWMN_1484"/>
<dbReference type="HOGENOM" id="CLU_057217_6_3_9"/>
<dbReference type="Proteomes" id="UP000006386">
    <property type="component" value="Chromosome"/>
</dbReference>
<dbReference type="GO" id="GO:0005737">
    <property type="term" value="C:cytoplasm"/>
    <property type="evidence" value="ECO:0007669"/>
    <property type="project" value="UniProtKB-SubCell"/>
</dbReference>
<dbReference type="GO" id="GO:0000774">
    <property type="term" value="F:adenyl-nucleotide exchange factor activity"/>
    <property type="evidence" value="ECO:0007669"/>
    <property type="project" value="InterPro"/>
</dbReference>
<dbReference type="GO" id="GO:0042803">
    <property type="term" value="F:protein homodimerization activity"/>
    <property type="evidence" value="ECO:0007669"/>
    <property type="project" value="InterPro"/>
</dbReference>
<dbReference type="GO" id="GO:0051087">
    <property type="term" value="F:protein-folding chaperone binding"/>
    <property type="evidence" value="ECO:0007669"/>
    <property type="project" value="InterPro"/>
</dbReference>
<dbReference type="GO" id="GO:0051082">
    <property type="term" value="F:unfolded protein binding"/>
    <property type="evidence" value="ECO:0007669"/>
    <property type="project" value="TreeGrafter"/>
</dbReference>
<dbReference type="GO" id="GO:0006457">
    <property type="term" value="P:protein folding"/>
    <property type="evidence" value="ECO:0007669"/>
    <property type="project" value="InterPro"/>
</dbReference>
<dbReference type="CDD" id="cd00446">
    <property type="entry name" value="GrpE"/>
    <property type="match status" value="1"/>
</dbReference>
<dbReference type="FunFam" id="2.30.22.10:FF:000001">
    <property type="entry name" value="Protein GrpE"/>
    <property type="match status" value="1"/>
</dbReference>
<dbReference type="FunFam" id="3.90.20.20:FF:000002">
    <property type="entry name" value="Protein GrpE"/>
    <property type="match status" value="1"/>
</dbReference>
<dbReference type="Gene3D" id="3.90.20.20">
    <property type="match status" value="1"/>
</dbReference>
<dbReference type="Gene3D" id="2.30.22.10">
    <property type="entry name" value="Head domain of nucleotide exchange factor GrpE"/>
    <property type="match status" value="1"/>
</dbReference>
<dbReference type="HAMAP" id="MF_01151">
    <property type="entry name" value="GrpE"/>
    <property type="match status" value="1"/>
</dbReference>
<dbReference type="InterPro" id="IPR000740">
    <property type="entry name" value="GrpE"/>
</dbReference>
<dbReference type="InterPro" id="IPR013805">
    <property type="entry name" value="GrpE_coiled_coil"/>
</dbReference>
<dbReference type="InterPro" id="IPR009012">
    <property type="entry name" value="GrpE_head"/>
</dbReference>
<dbReference type="NCBIfam" id="NF010738">
    <property type="entry name" value="PRK14140.1"/>
    <property type="match status" value="1"/>
</dbReference>
<dbReference type="PANTHER" id="PTHR21237">
    <property type="entry name" value="GRPE PROTEIN"/>
    <property type="match status" value="1"/>
</dbReference>
<dbReference type="PANTHER" id="PTHR21237:SF23">
    <property type="entry name" value="GRPE PROTEIN HOMOLOG, MITOCHONDRIAL"/>
    <property type="match status" value="1"/>
</dbReference>
<dbReference type="Pfam" id="PF01025">
    <property type="entry name" value="GrpE"/>
    <property type="match status" value="1"/>
</dbReference>
<dbReference type="PRINTS" id="PR00773">
    <property type="entry name" value="GRPEPROTEIN"/>
</dbReference>
<dbReference type="SUPFAM" id="SSF58014">
    <property type="entry name" value="Coiled-coil domain of nucleotide exchange factor GrpE"/>
    <property type="match status" value="1"/>
</dbReference>
<dbReference type="SUPFAM" id="SSF51064">
    <property type="entry name" value="Head domain of nucleotide exchange factor GrpE"/>
    <property type="match status" value="1"/>
</dbReference>
<dbReference type="PROSITE" id="PS01071">
    <property type="entry name" value="GRPE"/>
    <property type="match status" value="1"/>
</dbReference>
<keyword id="KW-0143">Chaperone</keyword>
<keyword id="KW-0963">Cytoplasm</keyword>
<keyword id="KW-0346">Stress response</keyword>
<comment type="function">
    <text evidence="1">Participates actively in the response to hyperosmotic and heat shock by preventing the aggregation of stress-denatured proteins, in association with DnaK and GrpE. It is the nucleotide exchange factor for DnaK and may function as a thermosensor. Unfolded proteins bind initially to DnaJ; upon interaction with the DnaJ-bound protein, DnaK hydrolyzes its bound ATP, resulting in the formation of a stable complex. GrpE releases ADP from DnaK; ATP binding to DnaK triggers the release of the substrate protein, thus completing the reaction cycle. Several rounds of ATP-dependent interactions between DnaJ, DnaK and GrpE are required for fully efficient folding.</text>
</comment>
<comment type="subunit">
    <text evidence="1">Homodimer.</text>
</comment>
<comment type="subcellular location">
    <subcellularLocation>
        <location evidence="1">Cytoplasm</location>
    </subcellularLocation>
</comment>
<comment type="similarity">
    <text evidence="1">Belongs to the GrpE family.</text>
</comment>
<organism>
    <name type="scientific">Staphylococcus aureus (strain Newman)</name>
    <dbReference type="NCBI Taxonomy" id="426430"/>
    <lineage>
        <taxon>Bacteria</taxon>
        <taxon>Bacillati</taxon>
        <taxon>Bacillota</taxon>
        <taxon>Bacilli</taxon>
        <taxon>Bacillales</taxon>
        <taxon>Staphylococcaceae</taxon>
        <taxon>Staphylococcus</taxon>
    </lineage>
</organism>
<evidence type="ECO:0000255" key="1">
    <source>
        <dbReference type="HAMAP-Rule" id="MF_01151"/>
    </source>
</evidence>
<evidence type="ECO:0000256" key="2">
    <source>
        <dbReference type="SAM" id="MobiDB-lite"/>
    </source>
</evidence>
<proteinExistence type="inferred from homology"/>